<name>CP240_MOUSE</name>
<sequence length="491" mass="55763">MDPFVVLVLCLSFLLVLSLWRQRSARGNLPPGPTPLPIIGNYHLIDMKDIGQCLTNFSKTYGPVFTLYFGSQPIVVLHGYEAIKEALIDHGEEFSGRGRIPVFDKVSTGKGIGFSHGNVWKATRVFTVNTLRNLGMGKRTIENKVQEEAQWLMKELKKTNGSPCDPQFIIGCAPCNVICSIVFQNRFDYKDKDFLSLIGKVNECTEILSSPGCQIFNAVPILIDYCPGSHNKLFKNHTWIKSYLLGKIKEHEESLDVTNPRDFIDYFLIQRRQKNGIEHMDYTIEHLATLVTDLVFGGTETLSSTMRFALLLLMKHTHITAKVQEEIDNVIGRHRSPCMQDRNHMPYTNAMVHEVQRYIDLGPNGVVHEVTCDTKFRNYFIPKGTQVMTSLTSVLHDSTEFPNPEVFDPGHFLDDNGNFKKSDYFVPFSAGKRICVGESLARMELFLFLTTILQNFKLKPLVDPKDIDMTPKHSGFSKIPPNFQMCFIPVE</sequence>
<accession>P56657</accession>
<accession>B2RTP3</accession>
<comment type="function">
    <text evidence="3 4">A cytochrome P450 monooxygenase that may play a major role in the metabolism of arachidonic acid in the intestinal tract (PubMed:10908295, PubMed:9721182). Exhibits regioselective hydroxylase and epoxidase activity toward arachidonic acid, producing 16(R)-hydroxyeicosatetraenoic acid (HETE) and (14R,15S)-epoxyeicosatrienoic acid (EpETrE) as major products (PubMed:10908295). Mechanistically, uses molecular oxygen inserting one oxygen atom into a substrate, and reducing the second into a water molecule, with two electrons provided by NADPH via cytochrome P450 reductase (CPR; NADPH-ferrihemoprotein reductase) (PubMed:10908295).</text>
</comment>
<comment type="catalytic activity">
    <reaction evidence="3">
        <text>(5Z,8Z,11Z,14Z)-eicosatetraenoate + reduced [NADPH--hemoprotein reductase] + O2 = 16(R)-hydroxy-(5Z,8Z,11Z,14Z)-eicosatetraenoate + oxidized [NADPH--hemoprotein reductase] + H2O + H(+)</text>
        <dbReference type="Rhea" id="RHEA:53308"/>
        <dbReference type="Rhea" id="RHEA-COMP:11964"/>
        <dbReference type="Rhea" id="RHEA-COMP:11965"/>
        <dbReference type="ChEBI" id="CHEBI:15377"/>
        <dbReference type="ChEBI" id="CHEBI:15378"/>
        <dbReference type="ChEBI" id="CHEBI:15379"/>
        <dbReference type="ChEBI" id="CHEBI:32395"/>
        <dbReference type="ChEBI" id="CHEBI:57618"/>
        <dbReference type="ChEBI" id="CHEBI:58210"/>
        <dbReference type="ChEBI" id="CHEBI:137166"/>
    </reaction>
    <physiologicalReaction direction="left-to-right" evidence="7">
        <dbReference type="Rhea" id="RHEA:53309"/>
    </physiologicalReaction>
</comment>
<comment type="catalytic activity">
    <reaction evidence="3">
        <text>(5Z,8Z,11Z,14Z)-eicosatetraenoate + reduced [NADPH--hemoprotein reductase] + O2 = 16(S)-hydroxy-(5Z,8Z,11Z,14Z)-eicosatetraenoate + oxidized [NADPH--hemoprotein reductase] + H2O + H(+)</text>
        <dbReference type="Rhea" id="RHEA:53312"/>
        <dbReference type="Rhea" id="RHEA-COMP:11964"/>
        <dbReference type="Rhea" id="RHEA-COMP:11965"/>
        <dbReference type="ChEBI" id="CHEBI:15377"/>
        <dbReference type="ChEBI" id="CHEBI:15378"/>
        <dbReference type="ChEBI" id="CHEBI:15379"/>
        <dbReference type="ChEBI" id="CHEBI:32395"/>
        <dbReference type="ChEBI" id="CHEBI:57618"/>
        <dbReference type="ChEBI" id="CHEBI:58210"/>
        <dbReference type="ChEBI" id="CHEBI:137167"/>
    </reaction>
    <physiologicalReaction direction="left-to-right" evidence="7">
        <dbReference type="Rhea" id="RHEA:53313"/>
    </physiologicalReaction>
</comment>
<comment type="catalytic activity">
    <reaction evidence="3">
        <text>(5Z,8Z,11Z,14Z)-eicosatetraenoate + reduced [NADPH--hemoprotein reductase] + O2 = (14R,15S)-epoxy-(5Z,8Z,11Z)-eicosatrienoate + oxidized [NADPH--hemoprotein reductase] + H2O + H(+)</text>
        <dbReference type="Rhea" id="RHEA:49860"/>
        <dbReference type="Rhea" id="RHEA-COMP:11964"/>
        <dbReference type="Rhea" id="RHEA-COMP:11965"/>
        <dbReference type="ChEBI" id="CHEBI:15377"/>
        <dbReference type="ChEBI" id="CHEBI:15378"/>
        <dbReference type="ChEBI" id="CHEBI:15379"/>
        <dbReference type="ChEBI" id="CHEBI:32395"/>
        <dbReference type="ChEBI" id="CHEBI:57618"/>
        <dbReference type="ChEBI" id="CHEBI:58210"/>
        <dbReference type="ChEBI" id="CHEBI:131965"/>
    </reaction>
    <physiologicalReaction direction="left-to-right" evidence="7">
        <dbReference type="Rhea" id="RHEA:49861"/>
    </physiologicalReaction>
</comment>
<comment type="catalytic activity">
    <reaction evidence="3">
        <text>(5Z,8Z,11Z,14Z)-eicosatetraenoate + reduced [NADPH--hemoprotein reductase] + O2 = (14S,15R)-epoxy-(5Z,8Z,11Z)-eicosatrienoate + oxidized [NADPH--hemoprotein reductase] + H2O + H(+)</text>
        <dbReference type="Rhea" id="RHEA:49856"/>
        <dbReference type="Rhea" id="RHEA-COMP:11964"/>
        <dbReference type="Rhea" id="RHEA-COMP:11965"/>
        <dbReference type="ChEBI" id="CHEBI:15377"/>
        <dbReference type="ChEBI" id="CHEBI:15378"/>
        <dbReference type="ChEBI" id="CHEBI:15379"/>
        <dbReference type="ChEBI" id="CHEBI:32395"/>
        <dbReference type="ChEBI" id="CHEBI:57618"/>
        <dbReference type="ChEBI" id="CHEBI:58210"/>
        <dbReference type="ChEBI" id="CHEBI:131964"/>
    </reaction>
    <physiologicalReaction direction="left-to-right" evidence="7">
        <dbReference type="Rhea" id="RHEA:49857"/>
    </physiologicalReaction>
</comment>
<comment type="cofactor">
    <cofactor evidence="1">
        <name>heme</name>
        <dbReference type="ChEBI" id="CHEBI:30413"/>
    </cofactor>
</comment>
<comment type="pathway">
    <text evidence="7">Lipid metabolism; arachidonate metabolism.</text>
</comment>
<comment type="subcellular location">
    <subcellularLocation>
        <location>Endoplasmic reticulum membrane</location>
        <topology>Peripheral membrane protein</topology>
    </subcellularLocation>
    <subcellularLocation>
        <location>Microsome membrane</location>
        <topology>Peripheral membrane protein</topology>
    </subcellularLocation>
</comment>
<comment type="tissue specificity">
    <text evidence="3 4">Liver, brain, kidney, and intestine, with trace amounts in lung and heart (PubMed:10908295, PubMed:9721182). Expressed throughout the intestinal tract, with higher expression levels in jejunum, cecum and colon (PubMed:10908295).</text>
</comment>
<comment type="similarity">
    <text evidence="6">Belongs to the cytochrome P450 family.</text>
</comment>
<dbReference type="EC" id="1.14.14.-" evidence="3"/>
<dbReference type="EMBL" id="AF047727">
    <property type="protein sequence ID" value="AAD13722.1"/>
    <property type="molecule type" value="mRNA"/>
</dbReference>
<dbReference type="EMBL" id="BC139471">
    <property type="protein sequence ID" value="AAI39472.1"/>
    <property type="molecule type" value="mRNA"/>
</dbReference>
<dbReference type="EMBL" id="BC139472">
    <property type="protein sequence ID" value="AAI39473.1"/>
    <property type="molecule type" value="mRNA"/>
</dbReference>
<dbReference type="CCDS" id="CCDS29798.3"/>
<dbReference type="RefSeq" id="NP_034134.3">
    <property type="nucleotide sequence ID" value="NM_010004.3"/>
</dbReference>
<dbReference type="SMR" id="P56657"/>
<dbReference type="BioGRID" id="199019">
    <property type="interactions" value="1"/>
</dbReference>
<dbReference type="FunCoup" id="P56657">
    <property type="interactions" value="613"/>
</dbReference>
<dbReference type="STRING" id="10090.ENSMUSP00000158887"/>
<dbReference type="SwissLipids" id="SLP:000001672"/>
<dbReference type="GlyGen" id="P56657">
    <property type="glycosylation" value="1 site"/>
</dbReference>
<dbReference type="iPTMnet" id="P56657"/>
<dbReference type="PhosphoSitePlus" id="P56657"/>
<dbReference type="SwissPalm" id="P56657"/>
<dbReference type="jPOST" id="P56657"/>
<dbReference type="PaxDb" id="10090-ENSMUSP00000125217"/>
<dbReference type="ProteomicsDB" id="284108"/>
<dbReference type="Ensembl" id="ENSMUST00000160476.9">
    <property type="protein sequence ID" value="ENSMUSP00000125217.3"/>
    <property type="gene ID" value="ENSMUSG00000025004.17"/>
</dbReference>
<dbReference type="GeneID" id="13099"/>
<dbReference type="KEGG" id="mmu:13099"/>
<dbReference type="AGR" id="MGI:1306815"/>
<dbReference type="CTD" id="13099"/>
<dbReference type="MGI" id="MGI:1306815">
    <property type="gene designation" value="Cyp2c40"/>
</dbReference>
<dbReference type="VEuPathDB" id="HostDB:ENSMUSG00000025004"/>
<dbReference type="eggNOG" id="KOG0156">
    <property type="taxonomic scope" value="Eukaryota"/>
</dbReference>
<dbReference type="GeneTree" id="ENSGT00940000155736"/>
<dbReference type="InParanoid" id="P56657"/>
<dbReference type="OMA" id="FHGLGNN"/>
<dbReference type="OrthoDB" id="2789670at2759"/>
<dbReference type="UniPathway" id="UPA00383"/>
<dbReference type="BioGRID-ORCS" id="13099">
    <property type="hits" value="2 hits in 48 CRISPR screens"/>
</dbReference>
<dbReference type="PRO" id="PR:P56657"/>
<dbReference type="Proteomes" id="UP000000589">
    <property type="component" value="Chromosome 19"/>
</dbReference>
<dbReference type="RNAct" id="P56657">
    <property type="molecule type" value="protein"/>
</dbReference>
<dbReference type="Bgee" id="ENSMUSG00000025004">
    <property type="expression patterns" value="Expressed in liver and 16 other cell types or tissues"/>
</dbReference>
<dbReference type="ExpressionAtlas" id="P56657">
    <property type="expression patterns" value="baseline and differential"/>
</dbReference>
<dbReference type="GO" id="GO:0005789">
    <property type="term" value="C:endoplasmic reticulum membrane"/>
    <property type="evidence" value="ECO:0007669"/>
    <property type="project" value="UniProtKB-SubCell"/>
</dbReference>
<dbReference type="GO" id="GO:0008404">
    <property type="term" value="F:arachidonate 14,15-epoxygenase activity"/>
    <property type="evidence" value="ECO:0000314"/>
    <property type="project" value="UniProtKB"/>
</dbReference>
<dbReference type="GO" id="GO:0020037">
    <property type="term" value="F:heme binding"/>
    <property type="evidence" value="ECO:0007669"/>
    <property type="project" value="InterPro"/>
</dbReference>
<dbReference type="GO" id="GO:0005506">
    <property type="term" value="F:iron ion binding"/>
    <property type="evidence" value="ECO:0007669"/>
    <property type="project" value="InterPro"/>
</dbReference>
<dbReference type="GO" id="GO:0019369">
    <property type="term" value="P:arachidonate metabolic process"/>
    <property type="evidence" value="ECO:0007669"/>
    <property type="project" value="UniProtKB-UniPathway"/>
</dbReference>
<dbReference type="CDD" id="cd20665">
    <property type="entry name" value="CYP2C-like"/>
    <property type="match status" value="1"/>
</dbReference>
<dbReference type="FunFam" id="1.10.630.10:FF:000299">
    <property type="entry name" value="Cytochrome P450 2C9"/>
    <property type="match status" value="1"/>
</dbReference>
<dbReference type="Gene3D" id="1.10.630.10">
    <property type="entry name" value="Cytochrome P450"/>
    <property type="match status" value="1"/>
</dbReference>
<dbReference type="InterPro" id="IPR001128">
    <property type="entry name" value="Cyt_P450"/>
</dbReference>
<dbReference type="InterPro" id="IPR017972">
    <property type="entry name" value="Cyt_P450_CS"/>
</dbReference>
<dbReference type="InterPro" id="IPR002401">
    <property type="entry name" value="Cyt_P450_E_grp-I"/>
</dbReference>
<dbReference type="InterPro" id="IPR036396">
    <property type="entry name" value="Cyt_P450_sf"/>
</dbReference>
<dbReference type="InterPro" id="IPR050182">
    <property type="entry name" value="Cytochrome_P450_fam2"/>
</dbReference>
<dbReference type="PANTHER" id="PTHR24300:SF140">
    <property type="entry name" value="CYTOCHROME P450 2C40-RELATED"/>
    <property type="match status" value="1"/>
</dbReference>
<dbReference type="PANTHER" id="PTHR24300">
    <property type="entry name" value="CYTOCHROME P450 508A4-RELATED"/>
    <property type="match status" value="1"/>
</dbReference>
<dbReference type="Pfam" id="PF00067">
    <property type="entry name" value="p450"/>
    <property type="match status" value="1"/>
</dbReference>
<dbReference type="PRINTS" id="PR00463">
    <property type="entry name" value="EP450I"/>
</dbReference>
<dbReference type="PRINTS" id="PR00385">
    <property type="entry name" value="P450"/>
</dbReference>
<dbReference type="SUPFAM" id="SSF48264">
    <property type="entry name" value="Cytochrome P450"/>
    <property type="match status" value="1"/>
</dbReference>
<dbReference type="PROSITE" id="PS00086">
    <property type="entry name" value="CYTOCHROME_P450"/>
    <property type="match status" value="1"/>
</dbReference>
<organism>
    <name type="scientific">Mus musculus</name>
    <name type="common">Mouse</name>
    <dbReference type="NCBI Taxonomy" id="10090"/>
    <lineage>
        <taxon>Eukaryota</taxon>
        <taxon>Metazoa</taxon>
        <taxon>Chordata</taxon>
        <taxon>Craniata</taxon>
        <taxon>Vertebrata</taxon>
        <taxon>Euteleostomi</taxon>
        <taxon>Mammalia</taxon>
        <taxon>Eutheria</taxon>
        <taxon>Euarchontoglires</taxon>
        <taxon>Glires</taxon>
        <taxon>Rodentia</taxon>
        <taxon>Myomorpha</taxon>
        <taxon>Muroidea</taxon>
        <taxon>Muridae</taxon>
        <taxon>Murinae</taxon>
        <taxon>Mus</taxon>
        <taxon>Mus</taxon>
    </lineage>
</organism>
<evidence type="ECO:0000250" key="1">
    <source>
        <dbReference type="UniProtKB" id="P08684"/>
    </source>
</evidence>
<evidence type="ECO:0000255" key="2"/>
<evidence type="ECO:0000269" key="3">
    <source>
    </source>
</evidence>
<evidence type="ECO:0000269" key="4">
    <source>
    </source>
</evidence>
<evidence type="ECO:0000303" key="5">
    <source>
    </source>
</evidence>
<evidence type="ECO:0000305" key="6"/>
<evidence type="ECO:0000305" key="7">
    <source>
    </source>
</evidence>
<evidence type="ECO:0000312" key="8">
    <source>
        <dbReference type="MGI" id="MGI:1306815"/>
    </source>
</evidence>
<gene>
    <name evidence="5 8" type="primary">Cyp2c40</name>
</gene>
<protein>
    <recommendedName>
        <fullName>Cytochrome P450 2C40</fullName>
        <ecNumber evidence="3">1.14.14.-</ecNumber>
    </recommendedName>
    <alternativeName>
        <fullName>CYPIIC40</fullName>
    </alternativeName>
</protein>
<proteinExistence type="evidence at protein level"/>
<keyword id="KW-0256">Endoplasmic reticulum</keyword>
<keyword id="KW-0349">Heme</keyword>
<keyword id="KW-0408">Iron</keyword>
<keyword id="KW-0443">Lipid metabolism</keyword>
<keyword id="KW-0472">Membrane</keyword>
<keyword id="KW-0479">Metal-binding</keyword>
<keyword id="KW-0492">Microsome</keyword>
<keyword id="KW-0503">Monooxygenase</keyword>
<keyword id="KW-0560">Oxidoreductase</keyword>
<keyword id="KW-1185">Reference proteome</keyword>
<keyword id="KW-0732">Signal</keyword>
<feature type="signal peptide" evidence="2">
    <location>
        <begin position="1"/>
        <end position="25"/>
    </location>
</feature>
<feature type="chain" id="PRO_0000051723" description="Cytochrome P450 2C40" evidence="2">
    <location>
        <begin position="26"/>
        <end position="491"/>
    </location>
</feature>
<feature type="binding site" description="axial binding residue" evidence="1">
    <location>
        <position position="435"/>
    </location>
    <ligand>
        <name>heme</name>
        <dbReference type="ChEBI" id="CHEBI:30413"/>
    </ligand>
    <ligandPart>
        <name>Fe</name>
        <dbReference type="ChEBI" id="CHEBI:18248"/>
    </ligandPart>
</feature>
<feature type="sequence conflict" description="In Ref. 1; AAD13722." evidence="6" ref="1">
    <original>P</original>
    <variation>L</variation>
    <location>
        <position position="382"/>
    </location>
</feature>
<reference key="1">
    <citation type="journal article" date="1998" name="Arch. Biochem. Biophys.">
        <title>Cloning and expression of murine CYP2Cs and their ability to metabolize arachidonic acid.</title>
        <authorList>
            <person name="Luo G."/>
            <person name="Zeldin D.C."/>
            <person name="Blaisdell J.A."/>
            <person name="Hodgson E."/>
            <person name="Goldstein J.A."/>
        </authorList>
    </citation>
    <scope>NUCLEOTIDE SEQUENCE [MRNA]</scope>
    <scope>TISSUE SPECIFICITY</scope>
    <scope>FUNCTION</scope>
    <source>
        <strain>CD-1</strain>
    </source>
</reference>
<reference key="2">
    <citation type="journal article" date="2004" name="Genome Res.">
        <title>The status, quality, and expansion of the NIH full-length cDNA project: the Mammalian Gene Collection (MGC).</title>
        <authorList>
            <consortium name="The MGC Project Team"/>
        </authorList>
    </citation>
    <scope>NUCLEOTIDE SEQUENCE [LARGE SCALE MRNA]</scope>
    <source>
        <tissue>Brain</tissue>
    </source>
</reference>
<reference key="3">
    <citation type="journal article" date="2000" name="Mol. Pharmacol.">
        <title>CYP2C40, a unique arachidonic acid 16-hydroxylase, is the major CYP2C in murine intestinal tract.</title>
        <authorList>
            <person name="Tsao C.C."/>
            <person name="Foley J."/>
            <person name="Coulter S.J."/>
            <person name="Maronpot R."/>
            <person name="Zeldin D.C."/>
            <person name="Goldstein J.A."/>
        </authorList>
    </citation>
    <scope>FUNCTION</scope>
    <scope>CATALYTIC ACTIVITY</scope>
    <scope>TISSUE SPECIFICITY</scope>
    <scope>PATHWAY</scope>
</reference>
<reference key="4">
    <citation type="journal article" date="2010" name="Cell">
        <title>A tissue-specific atlas of mouse protein phosphorylation and expression.</title>
        <authorList>
            <person name="Huttlin E.L."/>
            <person name="Jedrychowski M.P."/>
            <person name="Elias J.E."/>
            <person name="Goswami T."/>
            <person name="Rad R."/>
            <person name="Beausoleil S.A."/>
            <person name="Villen J."/>
            <person name="Haas W."/>
            <person name="Sowa M.E."/>
            <person name="Gygi S.P."/>
        </authorList>
    </citation>
    <scope>IDENTIFICATION BY MASS SPECTROMETRY [LARGE SCALE ANALYSIS]</scope>
    <source>
        <tissue>Liver</tissue>
    </source>
</reference>